<evidence type="ECO:0000250" key="1">
    <source>
        <dbReference type="UniProtKB" id="P03886"/>
    </source>
</evidence>
<evidence type="ECO:0000250" key="2">
    <source>
        <dbReference type="UniProtKB" id="P03887"/>
    </source>
</evidence>
<evidence type="ECO:0000255" key="3"/>
<evidence type="ECO:0000305" key="4"/>
<protein>
    <recommendedName>
        <fullName>NADH-ubiquinone oxidoreductase chain 1</fullName>
        <ecNumber evidence="1">7.1.1.2</ecNumber>
    </recommendedName>
    <alternativeName>
        <fullName>NADH dehydrogenase subunit 1</fullName>
    </alternativeName>
</protein>
<sequence>MFLMNILCLVIPILLAMAFLTLVERKILGYMQLRKGPNIVGPYGLLQPIADAIKLFIKEPLRPLTSSKLMFTLAPTLAFTLALSLWIPMPMPHPLINLNLGVLFILALSSLAVYSILWSGWASNSKYALIGALRAVAQTISYEVTLAIILLSIMMMNGSFTLSTLTTTQEHMWLIFPLWPLAMMWFISTLAETNRAPFDLTEGESELVSGFNVEYAAGPFALFFMAEYTNIIMMNALTTTLFLGAFHNPLFPELFTVNFITKTLILTMMFLWVRASYPRFRYDQLMHLLWKSFLPLTLALCMFHVSMPALSAGVPPHM</sequence>
<keyword id="KW-0249">Electron transport</keyword>
<keyword id="KW-0472">Membrane</keyword>
<keyword id="KW-0496">Mitochondrion</keyword>
<keyword id="KW-0999">Mitochondrion inner membrane</keyword>
<keyword id="KW-0520">NAD</keyword>
<keyword id="KW-0679">Respiratory chain</keyword>
<keyword id="KW-1278">Translocase</keyword>
<keyword id="KW-0812">Transmembrane</keyword>
<keyword id="KW-1133">Transmembrane helix</keyword>
<keyword id="KW-0813">Transport</keyword>
<keyword id="KW-0830">Ubiquinone</keyword>
<geneLocation type="mitochondrion"/>
<accession>Q70Y26</accession>
<feature type="chain" id="PRO_0000117405" description="NADH-ubiquinone oxidoreductase chain 1">
    <location>
        <begin position="1"/>
        <end position="318"/>
    </location>
</feature>
<feature type="transmembrane region" description="Helical" evidence="3">
    <location>
        <begin position="2"/>
        <end position="22"/>
    </location>
</feature>
<feature type="transmembrane region" description="Helical" evidence="3">
    <location>
        <begin position="37"/>
        <end position="57"/>
    </location>
</feature>
<feature type="transmembrane region" description="Helical" evidence="3">
    <location>
        <begin position="69"/>
        <end position="89"/>
    </location>
</feature>
<feature type="transmembrane region" description="Helical" evidence="3">
    <location>
        <begin position="100"/>
        <end position="120"/>
    </location>
</feature>
<feature type="transmembrane region" description="Helical" evidence="3">
    <location>
        <begin position="136"/>
        <end position="156"/>
    </location>
</feature>
<feature type="transmembrane region" description="Helical" evidence="3">
    <location>
        <begin position="171"/>
        <end position="191"/>
    </location>
</feature>
<feature type="transmembrane region" description="Helical" evidence="3">
    <location>
        <begin position="231"/>
        <end position="251"/>
    </location>
</feature>
<feature type="transmembrane region" description="Helical" evidence="3">
    <location>
        <begin position="253"/>
        <end position="273"/>
    </location>
</feature>
<feature type="transmembrane region" description="Helical" evidence="3">
    <location>
        <begin position="293"/>
        <end position="313"/>
    </location>
</feature>
<gene>
    <name type="primary">MT-ND1</name>
    <name type="synonym">MTND1</name>
    <name type="synonym">NADH1</name>
    <name type="synonym">ND1</name>
</gene>
<name>NU1M_EUPSX</name>
<dbReference type="EC" id="7.1.1.2" evidence="1"/>
<dbReference type="EMBL" id="AJ505834">
    <property type="protein sequence ID" value="CAD44381.1"/>
    <property type="molecule type" value="Genomic_DNA"/>
</dbReference>
<dbReference type="RefSeq" id="YP_009184439.1">
    <property type="nucleotide sequence ID" value="NC_028571.1"/>
</dbReference>
<dbReference type="SMR" id="Q70Y26"/>
<dbReference type="GeneID" id="26377845"/>
<dbReference type="CTD" id="4535"/>
<dbReference type="GO" id="GO:0005743">
    <property type="term" value="C:mitochondrial inner membrane"/>
    <property type="evidence" value="ECO:0000250"/>
    <property type="project" value="UniProtKB"/>
</dbReference>
<dbReference type="GO" id="GO:0008137">
    <property type="term" value="F:NADH dehydrogenase (ubiquinone) activity"/>
    <property type="evidence" value="ECO:0000250"/>
    <property type="project" value="UniProtKB"/>
</dbReference>
<dbReference type="GO" id="GO:0006120">
    <property type="term" value="P:mitochondrial electron transport, NADH to ubiquinone"/>
    <property type="evidence" value="ECO:0000250"/>
    <property type="project" value="UniProtKB"/>
</dbReference>
<dbReference type="GO" id="GO:0032981">
    <property type="term" value="P:mitochondrial respiratory chain complex I assembly"/>
    <property type="evidence" value="ECO:0000250"/>
    <property type="project" value="UniProtKB"/>
</dbReference>
<dbReference type="HAMAP" id="MF_01350">
    <property type="entry name" value="NDH1_NuoH"/>
    <property type="match status" value="1"/>
</dbReference>
<dbReference type="InterPro" id="IPR001694">
    <property type="entry name" value="NADH_UbQ_OxRdtase_su1/FPO"/>
</dbReference>
<dbReference type="InterPro" id="IPR018086">
    <property type="entry name" value="NADH_UbQ_OxRdtase_su1_CS"/>
</dbReference>
<dbReference type="PANTHER" id="PTHR11432">
    <property type="entry name" value="NADH DEHYDROGENASE SUBUNIT 1"/>
    <property type="match status" value="1"/>
</dbReference>
<dbReference type="PANTHER" id="PTHR11432:SF3">
    <property type="entry name" value="NADH-UBIQUINONE OXIDOREDUCTASE CHAIN 1"/>
    <property type="match status" value="1"/>
</dbReference>
<dbReference type="Pfam" id="PF00146">
    <property type="entry name" value="NADHdh"/>
    <property type="match status" value="1"/>
</dbReference>
<dbReference type="PROSITE" id="PS00667">
    <property type="entry name" value="COMPLEX1_ND1_1"/>
    <property type="match status" value="1"/>
</dbReference>
<dbReference type="PROSITE" id="PS00668">
    <property type="entry name" value="COMPLEX1_ND1_2"/>
    <property type="match status" value="1"/>
</dbReference>
<organism>
    <name type="scientific">Euphractus sexcinctus</name>
    <name type="common">Six-banded armadillo</name>
    <name type="synonym">Dasypus sexcinctus</name>
    <dbReference type="NCBI Taxonomy" id="143300"/>
    <lineage>
        <taxon>Eukaryota</taxon>
        <taxon>Metazoa</taxon>
        <taxon>Chordata</taxon>
        <taxon>Craniata</taxon>
        <taxon>Vertebrata</taxon>
        <taxon>Euteleostomi</taxon>
        <taxon>Mammalia</taxon>
        <taxon>Eutheria</taxon>
        <taxon>Xenarthra</taxon>
        <taxon>Cingulata</taxon>
        <taxon>Chlamyphoridae</taxon>
        <taxon>Euphractus</taxon>
    </lineage>
</organism>
<comment type="function">
    <text evidence="1">Core subunit of the mitochondrial membrane respiratory chain NADH dehydrogenase (Complex I) which catalyzes electron transfer from NADH through the respiratory chain, using ubiquinone as an electron acceptor. Essential for the catalytic activity and assembly of complex I.</text>
</comment>
<comment type="catalytic activity">
    <reaction evidence="1">
        <text>a ubiquinone + NADH + 5 H(+)(in) = a ubiquinol + NAD(+) + 4 H(+)(out)</text>
        <dbReference type="Rhea" id="RHEA:29091"/>
        <dbReference type="Rhea" id="RHEA-COMP:9565"/>
        <dbReference type="Rhea" id="RHEA-COMP:9566"/>
        <dbReference type="ChEBI" id="CHEBI:15378"/>
        <dbReference type="ChEBI" id="CHEBI:16389"/>
        <dbReference type="ChEBI" id="CHEBI:17976"/>
        <dbReference type="ChEBI" id="CHEBI:57540"/>
        <dbReference type="ChEBI" id="CHEBI:57945"/>
        <dbReference type="EC" id="7.1.1.2"/>
    </reaction>
</comment>
<comment type="subunit">
    <text evidence="2">Core subunit of respiratory chain NADH dehydrogenase (Complex I) which is composed of 45 different subunits.</text>
</comment>
<comment type="subcellular location">
    <subcellularLocation>
        <location evidence="2">Mitochondrion inner membrane</location>
        <topology evidence="3">Multi-pass membrane protein</topology>
    </subcellularLocation>
</comment>
<comment type="similarity">
    <text evidence="4">Belongs to the complex I subunit 1 family.</text>
</comment>
<reference key="1">
    <citation type="journal article" date="2003" name="Mol. Phylogenet. Evol.">
        <title>Molecular systematics of armadillos (Xenarthra, Dasypodidae): contribution of maximum likelihood and Bayesian analyses of mitochondrial and nuclear genes.</title>
        <authorList>
            <person name="Delsuc F."/>
            <person name="Stanhope M.J."/>
            <person name="Douzery E.J."/>
        </authorList>
    </citation>
    <scope>NUCLEOTIDE SEQUENCE [GENOMIC DNA]</scope>
</reference>
<proteinExistence type="inferred from homology"/>